<name>RS16_RICAH</name>
<proteinExistence type="inferred from homology"/>
<organism>
    <name type="scientific">Rickettsia akari (strain Hartford)</name>
    <dbReference type="NCBI Taxonomy" id="293614"/>
    <lineage>
        <taxon>Bacteria</taxon>
        <taxon>Pseudomonadati</taxon>
        <taxon>Pseudomonadota</taxon>
        <taxon>Alphaproteobacteria</taxon>
        <taxon>Rickettsiales</taxon>
        <taxon>Rickettsiaceae</taxon>
        <taxon>Rickettsieae</taxon>
        <taxon>Rickettsia</taxon>
        <taxon>spotted fever group</taxon>
    </lineage>
</organism>
<sequence length="111" mass="12432">MAVKIRLARGGAKKRPFYRVVIANAAAPRDGDFLEKVGTYNPMLASDNSERVVLKKDRIEYWLGTGAKPTERVAKFIEQAGLTLPEKVKKEMDVKAKNRKARSSKQEAKEA</sequence>
<feature type="chain" id="PRO_1000049333" description="Small ribosomal subunit protein bS16">
    <location>
        <begin position="1"/>
        <end position="111"/>
    </location>
</feature>
<feature type="region of interest" description="Disordered" evidence="2">
    <location>
        <begin position="92"/>
        <end position="111"/>
    </location>
</feature>
<protein>
    <recommendedName>
        <fullName evidence="1">Small ribosomal subunit protein bS16</fullName>
    </recommendedName>
    <alternativeName>
        <fullName evidence="3">30S ribosomal protein S16</fullName>
    </alternativeName>
</protein>
<gene>
    <name evidence="1" type="primary">rpsP</name>
    <name type="ordered locus">A1C_06795</name>
</gene>
<evidence type="ECO:0000255" key="1">
    <source>
        <dbReference type="HAMAP-Rule" id="MF_00385"/>
    </source>
</evidence>
<evidence type="ECO:0000256" key="2">
    <source>
        <dbReference type="SAM" id="MobiDB-lite"/>
    </source>
</evidence>
<evidence type="ECO:0000305" key="3"/>
<dbReference type="EMBL" id="CP000847">
    <property type="protein sequence ID" value="ABV75582.1"/>
    <property type="molecule type" value="Genomic_DNA"/>
</dbReference>
<dbReference type="RefSeq" id="WP_012150211.1">
    <property type="nucleotide sequence ID" value="NC_009881.1"/>
</dbReference>
<dbReference type="SMR" id="A8GQA7"/>
<dbReference type="STRING" id="293614.A1C_06795"/>
<dbReference type="KEGG" id="rak:A1C_06795"/>
<dbReference type="eggNOG" id="COG0228">
    <property type="taxonomic scope" value="Bacteria"/>
</dbReference>
<dbReference type="HOGENOM" id="CLU_100590_3_1_5"/>
<dbReference type="Proteomes" id="UP000006830">
    <property type="component" value="Chromosome"/>
</dbReference>
<dbReference type="GO" id="GO:0005737">
    <property type="term" value="C:cytoplasm"/>
    <property type="evidence" value="ECO:0007669"/>
    <property type="project" value="UniProtKB-ARBA"/>
</dbReference>
<dbReference type="GO" id="GO:0015935">
    <property type="term" value="C:small ribosomal subunit"/>
    <property type="evidence" value="ECO:0007669"/>
    <property type="project" value="TreeGrafter"/>
</dbReference>
<dbReference type="GO" id="GO:0003735">
    <property type="term" value="F:structural constituent of ribosome"/>
    <property type="evidence" value="ECO:0007669"/>
    <property type="project" value="InterPro"/>
</dbReference>
<dbReference type="GO" id="GO:0006412">
    <property type="term" value="P:translation"/>
    <property type="evidence" value="ECO:0007669"/>
    <property type="project" value="UniProtKB-UniRule"/>
</dbReference>
<dbReference type="Gene3D" id="3.30.1320.10">
    <property type="match status" value="1"/>
</dbReference>
<dbReference type="HAMAP" id="MF_00385">
    <property type="entry name" value="Ribosomal_bS16"/>
    <property type="match status" value="1"/>
</dbReference>
<dbReference type="InterPro" id="IPR000307">
    <property type="entry name" value="Ribosomal_bS16"/>
</dbReference>
<dbReference type="InterPro" id="IPR020592">
    <property type="entry name" value="Ribosomal_bS16_CS"/>
</dbReference>
<dbReference type="InterPro" id="IPR023803">
    <property type="entry name" value="Ribosomal_bS16_dom_sf"/>
</dbReference>
<dbReference type="NCBIfam" id="TIGR00002">
    <property type="entry name" value="S16"/>
    <property type="match status" value="1"/>
</dbReference>
<dbReference type="PANTHER" id="PTHR12919">
    <property type="entry name" value="30S RIBOSOMAL PROTEIN S16"/>
    <property type="match status" value="1"/>
</dbReference>
<dbReference type="PANTHER" id="PTHR12919:SF20">
    <property type="entry name" value="SMALL RIBOSOMAL SUBUNIT PROTEIN BS16M"/>
    <property type="match status" value="1"/>
</dbReference>
<dbReference type="Pfam" id="PF00886">
    <property type="entry name" value="Ribosomal_S16"/>
    <property type="match status" value="1"/>
</dbReference>
<dbReference type="SUPFAM" id="SSF54565">
    <property type="entry name" value="Ribosomal protein S16"/>
    <property type="match status" value="1"/>
</dbReference>
<dbReference type="PROSITE" id="PS00732">
    <property type="entry name" value="RIBOSOMAL_S16"/>
    <property type="match status" value="1"/>
</dbReference>
<reference key="1">
    <citation type="submission" date="2007-09" db="EMBL/GenBank/DDBJ databases">
        <title>Complete genome sequence of Rickettsia akari.</title>
        <authorList>
            <person name="Madan A."/>
            <person name="Fahey J."/>
            <person name="Helton E."/>
            <person name="Ketteman M."/>
            <person name="Madan A."/>
            <person name="Rodrigues S."/>
            <person name="Sanchez A."/>
            <person name="Whiting M."/>
            <person name="Dasch G."/>
            <person name="Eremeeva M."/>
        </authorList>
    </citation>
    <scope>NUCLEOTIDE SEQUENCE [LARGE SCALE GENOMIC DNA]</scope>
    <source>
        <strain>Hartford</strain>
    </source>
</reference>
<comment type="similarity">
    <text evidence="1">Belongs to the bacterial ribosomal protein bS16 family.</text>
</comment>
<keyword id="KW-0687">Ribonucleoprotein</keyword>
<keyword id="KW-0689">Ribosomal protein</keyword>
<accession>A8GQA7</accession>